<protein>
    <recommendedName>
        <fullName evidence="1">sn-glycerol-3-phosphate-binding periplasmic protein UgpB</fullName>
    </recommendedName>
</protein>
<keyword id="KW-0574">Periplasm</keyword>
<keyword id="KW-0732">Signal</keyword>
<keyword id="KW-0813">Transport</keyword>
<feature type="signal peptide" evidence="2">
    <location>
        <begin position="1"/>
        <end position="25"/>
    </location>
</feature>
<feature type="chain" id="PRO_5000200845" description="sn-glycerol-3-phosphate-binding periplasmic protein UgpB">
    <location>
        <begin position="26"/>
        <end position="439"/>
    </location>
</feature>
<feature type="binding site" evidence="1">
    <location>
        <position position="67"/>
    </location>
    <ligand>
        <name>sn-glycerol 3-phosphate</name>
        <dbReference type="ChEBI" id="CHEBI:57597"/>
    </ligand>
</feature>
<feature type="binding site" evidence="1">
    <location>
        <position position="91"/>
    </location>
    <ligand>
        <name>sn-glycerol 3-phosphate</name>
        <dbReference type="ChEBI" id="CHEBI:57597"/>
    </ligand>
</feature>
<feature type="binding site" evidence="1">
    <location>
        <position position="146"/>
    </location>
    <ligand>
        <name>sn-glycerol 3-phosphate</name>
        <dbReference type="ChEBI" id="CHEBI:57597"/>
    </ligand>
</feature>
<feature type="binding site" evidence="1">
    <location>
        <position position="272"/>
    </location>
    <ligand>
        <name>sn-glycerol 3-phosphate</name>
        <dbReference type="ChEBI" id="CHEBI:57597"/>
    </ligand>
</feature>
<feature type="binding site" evidence="1">
    <location>
        <position position="309"/>
    </location>
    <ligand>
        <name>sn-glycerol 3-phosphate</name>
        <dbReference type="ChEBI" id="CHEBI:57597"/>
    </ligand>
</feature>
<feature type="binding site" evidence="1">
    <location>
        <position position="348"/>
    </location>
    <ligand>
        <name>sn-glycerol 3-phosphate</name>
        <dbReference type="ChEBI" id="CHEBI:57597"/>
    </ligand>
</feature>
<feature type="binding site" evidence="1">
    <location>
        <position position="399"/>
    </location>
    <ligand>
        <name>sn-glycerol 3-phosphate</name>
        <dbReference type="ChEBI" id="CHEBI:57597"/>
    </ligand>
</feature>
<organism>
    <name type="scientific">Yersinia enterocolitica serotype O:8 / biotype 1B (strain NCTC 13174 / 8081)</name>
    <dbReference type="NCBI Taxonomy" id="393305"/>
    <lineage>
        <taxon>Bacteria</taxon>
        <taxon>Pseudomonadati</taxon>
        <taxon>Pseudomonadota</taxon>
        <taxon>Gammaproteobacteria</taxon>
        <taxon>Enterobacterales</taxon>
        <taxon>Yersiniaceae</taxon>
        <taxon>Yersinia</taxon>
    </lineage>
</organism>
<proteinExistence type="inferred from homology"/>
<accession>A1JID7</accession>
<comment type="function">
    <text evidence="1">Part of the ABC transporter complex UgpBAEC involved in sn-glycerol-3-phosphate (G3P) import. Binds G3P.</text>
</comment>
<comment type="subunit">
    <text evidence="1">The complex is composed of two ATP-binding proteins (UgpC), two transmembrane proteins (UgpA and UgpE) and a solute-binding protein (UgpB).</text>
</comment>
<comment type="subcellular location">
    <subcellularLocation>
        <location evidence="1">Periplasm</location>
    </subcellularLocation>
</comment>
<comment type="similarity">
    <text evidence="3">Belongs to the bacterial solute-binding protein 1 family.</text>
</comment>
<dbReference type="EMBL" id="AM286415">
    <property type="protein sequence ID" value="CAL10375.1"/>
    <property type="molecule type" value="Genomic_DNA"/>
</dbReference>
<dbReference type="RefSeq" id="WP_011815362.1">
    <property type="nucleotide sequence ID" value="NC_008800.1"/>
</dbReference>
<dbReference type="RefSeq" id="YP_001004627.1">
    <property type="nucleotide sequence ID" value="NC_008800.1"/>
</dbReference>
<dbReference type="SMR" id="A1JID7"/>
<dbReference type="KEGG" id="yen:YE0241"/>
<dbReference type="PATRIC" id="fig|393305.7.peg.333"/>
<dbReference type="eggNOG" id="COG1653">
    <property type="taxonomic scope" value="Bacteria"/>
</dbReference>
<dbReference type="HOGENOM" id="CLU_031285_3_0_6"/>
<dbReference type="OrthoDB" id="4393730at2"/>
<dbReference type="Proteomes" id="UP000000642">
    <property type="component" value="Chromosome"/>
</dbReference>
<dbReference type="GO" id="GO:0030313">
    <property type="term" value="C:cell envelope"/>
    <property type="evidence" value="ECO:0007669"/>
    <property type="project" value="UniProtKB-ARBA"/>
</dbReference>
<dbReference type="GO" id="GO:0042597">
    <property type="term" value="C:periplasmic space"/>
    <property type="evidence" value="ECO:0007669"/>
    <property type="project" value="UniProtKB-SubCell"/>
</dbReference>
<dbReference type="GO" id="GO:0055085">
    <property type="term" value="P:transmembrane transport"/>
    <property type="evidence" value="ECO:0007669"/>
    <property type="project" value="InterPro"/>
</dbReference>
<dbReference type="CDD" id="cd14748">
    <property type="entry name" value="PBP2_UgpB"/>
    <property type="match status" value="1"/>
</dbReference>
<dbReference type="Gene3D" id="3.40.190.10">
    <property type="entry name" value="Periplasmic binding protein-like II"/>
    <property type="match status" value="2"/>
</dbReference>
<dbReference type="InterPro" id="IPR050490">
    <property type="entry name" value="Bact_solute-bd_prot1"/>
</dbReference>
<dbReference type="InterPro" id="IPR006059">
    <property type="entry name" value="SBP"/>
</dbReference>
<dbReference type="InterPro" id="IPR006061">
    <property type="entry name" value="SBP_1_CS"/>
</dbReference>
<dbReference type="NCBIfam" id="NF008211">
    <property type="entry name" value="PRK10974.1"/>
    <property type="match status" value="1"/>
</dbReference>
<dbReference type="PANTHER" id="PTHR43649">
    <property type="entry name" value="ARABINOSE-BINDING PROTEIN-RELATED"/>
    <property type="match status" value="1"/>
</dbReference>
<dbReference type="PANTHER" id="PTHR43649:SF31">
    <property type="entry name" value="SN-GLYCEROL-3-PHOSPHATE-BINDING PERIPLASMIC PROTEIN UGPB"/>
    <property type="match status" value="1"/>
</dbReference>
<dbReference type="Pfam" id="PF13416">
    <property type="entry name" value="SBP_bac_8"/>
    <property type="match status" value="1"/>
</dbReference>
<dbReference type="SUPFAM" id="SSF53850">
    <property type="entry name" value="Periplasmic binding protein-like II"/>
    <property type="match status" value="1"/>
</dbReference>
<dbReference type="PROSITE" id="PS01037">
    <property type="entry name" value="SBP_BACTERIAL_1"/>
    <property type="match status" value="1"/>
</dbReference>
<reference key="1">
    <citation type="journal article" date="2006" name="PLoS Genet.">
        <title>The complete genome sequence and comparative genome analysis of the high pathogenicity Yersinia enterocolitica strain 8081.</title>
        <authorList>
            <person name="Thomson N.R."/>
            <person name="Howard S."/>
            <person name="Wren B.W."/>
            <person name="Holden M.T.G."/>
            <person name="Crossman L."/>
            <person name="Challis G.L."/>
            <person name="Churcher C."/>
            <person name="Mungall K."/>
            <person name="Brooks K."/>
            <person name="Chillingworth T."/>
            <person name="Feltwell T."/>
            <person name="Abdellah Z."/>
            <person name="Hauser H."/>
            <person name="Jagels K."/>
            <person name="Maddison M."/>
            <person name="Moule S."/>
            <person name="Sanders M."/>
            <person name="Whitehead S."/>
            <person name="Quail M.A."/>
            <person name="Dougan G."/>
            <person name="Parkhill J."/>
            <person name="Prentice M.B."/>
        </authorList>
    </citation>
    <scope>NUCLEOTIDE SEQUENCE [LARGE SCALE GENOMIC DNA]</scope>
    <source>
        <strain>NCTC 13174 / 8081</strain>
    </source>
</reference>
<name>UGPB_YERE8</name>
<sequence>MFNNAIRKTSICVALTLAFSANAMAVTEIPFWHSMEGELGVEVNSLADRFNQSHSDYKIVPVYKGNYEQSLAAGIAAFRSGKAPAILQVYEVGTATMMASKAIKPVFQVFKDANINFDESVFVPTVAGYYTDAKTGHLLSQPFNSSTPVLYYNKDAFKKAGLNPDQPPKTWQELAEDTAKLRAAGSSCGYASGWQGWIQIENFSAWHGQPIASRNNGFDGTDAVLEFNKPLQVKHIQLLSDMNKKGDFTYFGRKDESTAKFYNGDCAITTASSGSLADIRHYAKFNYGVGMMPYDADAKDAPQNAIIGGASLWVMDGKDKDTYKGVAEFLQFLTQPEIAAEWHQKTGYLPITTAAYELTKQQGFYDKNPGADVATRQMLNKPPLPYTKGLRLGNMPQIRTVVDEELEGVWTGKKTPQQALDTAVSRGDVLLHRFEQTNK</sequence>
<gene>
    <name type="primary">ugpB</name>
    <name type="ordered locus">YE0241</name>
</gene>
<evidence type="ECO:0000250" key="1">
    <source>
        <dbReference type="UniProtKB" id="P0AG80"/>
    </source>
</evidence>
<evidence type="ECO:0000255" key="2"/>
<evidence type="ECO:0000305" key="3"/>